<gene>
    <name type="primary">hssl56</name>
    <name type="ORF">DDB_G0282319</name>
</gene>
<keyword id="KW-1185">Reference proteome</keyword>
<comment type="similarity">
    <text evidence="1">Belongs to the hssA/B family.</text>
</comment>
<name>HSL56_DICDI</name>
<protein>
    <recommendedName>
        <fullName>HssA/B-like protein 56</fullName>
    </recommendedName>
</protein>
<organism>
    <name type="scientific">Dictyostelium discoideum</name>
    <name type="common">Social amoeba</name>
    <dbReference type="NCBI Taxonomy" id="44689"/>
    <lineage>
        <taxon>Eukaryota</taxon>
        <taxon>Amoebozoa</taxon>
        <taxon>Evosea</taxon>
        <taxon>Eumycetozoa</taxon>
        <taxon>Dictyostelia</taxon>
        <taxon>Dictyosteliales</taxon>
        <taxon>Dictyosteliaceae</taxon>
        <taxon>Dictyostelium</taxon>
    </lineage>
</organism>
<dbReference type="EMBL" id="AAFI02000047">
    <property type="protein sequence ID" value="EAL66281.1"/>
    <property type="molecule type" value="Genomic_DNA"/>
</dbReference>
<dbReference type="RefSeq" id="XP_640254.1">
    <property type="nucleotide sequence ID" value="XM_635162.1"/>
</dbReference>
<dbReference type="FunCoup" id="Q54SP7">
    <property type="interactions" value="243"/>
</dbReference>
<dbReference type="PaxDb" id="44689-DDB0252799"/>
<dbReference type="EnsemblProtists" id="EAL66281">
    <property type="protein sequence ID" value="EAL66281"/>
    <property type="gene ID" value="DDB_G0282319"/>
</dbReference>
<dbReference type="GeneID" id="8623513"/>
<dbReference type="KEGG" id="ddi:DDB_G0282319"/>
<dbReference type="dictyBase" id="DDB_G0282319"/>
<dbReference type="VEuPathDB" id="AmoebaDB:DDB_G0282319"/>
<dbReference type="HOGENOM" id="CLU_181850_1_0_1"/>
<dbReference type="InParanoid" id="Q54SP7"/>
<dbReference type="PhylomeDB" id="Q54SP7"/>
<dbReference type="PRO" id="PR:Q54SP7"/>
<dbReference type="Proteomes" id="UP000002195">
    <property type="component" value="Chromosome 3"/>
</dbReference>
<dbReference type="GO" id="GO:0030587">
    <property type="term" value="P:sorocarp development"/>
    <property type="evidence" value="ECO:0000318"/>
    <property type="project" value="GO_Central"/>
</dbReference>
<dbReference type="InterPro" id="IPR050533">
    <property type="entry name" value="HssA/B-like_chaperone"/>
</dbReference>
<dbReference type="InterPro" id="IPR008455">
    <property type="entry name" value="HssA/B-related"/>
</dbReference>
<dbReference type="PANTHER" id="PTHR31059">
    <property type="entry name" value="HSSA/B-LIKE PROTEIN 1-RELATED-RELATED"/>
    <property type="match status" value="1"/>
</dbReference>
<dbReference type="PANTHER" id="PTHR31059:SF5">
    <property type="entry name" value="HSSA_B-LIKE PROTEIN 1-RELATED"/>
    <property type="match status" value="1"/>
</dbReference>
<dbReference type="Pfam" id="PF05710">
    <property type="entry name" value="Coiled"/>
    <property type="match status" value="1"/>
</dbReference>
<proteinExistence type="inferred from homology"/>
<evidence type="ECO:0000305" key="1"/>
<accession>Q54SP7</accession>
<feature type="chain" id="PRO_0000330424" description="HssA/B-like protein 56">
    <location>
        <begin position="1"/>
        <end position="87"/>
    </location>
</feature>
<sequence length="87" mass="8771">MTILSAITSISRPNKISKSVISSNGGASLSMGSNSVSCFNACGGGSSYSYSSSYSGSGLDYSYKANYSSSTGYNSSVVIASSTCHCS</sequence>
<reference key="1">
    <citation type="journal article" date="2005" name="Nature">
        <title>The genome of the social amoeba Dictyostelium discoideum.</title>
        <authorList>
            <person name="Eichinger L."/>
            <person name="Pachebat J.A."/>
            <person name="Gloeckner G."/>
            <person name="Rajandream M.A."/>
            <person name="Sucgang R."/>
            <person name="Berriman M."/>
            <person name="Song J."/>
            <person name="Olsen R."/>
            <person name="Szafranski K."/>
            <person name="Xu Q."/>
            <person name="Tunggal B."/>
            <person name="Kummerfeld S."/>
            <person name="Madera M."/>
            <person name="Konfortov B.A."/>
            <person name="Rivero F."/>
            <person name="Bankier A.T."/>
            <person name="Lehmann R."/>
            <person name="Hamlin N."/>
            <person name="Davies R."/>
            <person name="Gaudet P."/>
            <person name="Fey P."/>
            <person name="Pilcher K."/>
            <person name="Chen G."/>
            <person name="Saunders D."/>
            <person name="Sodergren E.J."/>
            <person name="Davis P."/>
            <person name="Kerhornou A."/>
            <person name="Nie X."/>
            <person name="Hall N."/>
            <person name="Anjard C."/>
            <person name="Hemphill L."/>
            <person name="Bason N."/>
            <person name="Farbrother P."/>
            <person name="Desany B."/>
            <person name="Just E."/>
            <person name="Morio T."/>
            <person name="Rost R."/>
            <person name="Churcher C.M."/>
            <person name="Cooper J."/>
            <person name="Haydock S."/>
            <person name="van Driessche N."/>
            <person name="Cronin A."/>
            <person name="Goodhead I."/>
            <person name="Muzny D.M."/>
            <person name="Mourier T."/>
            <person name="Pain A."/>
            <person name="Lu M."/>
            <person name="Harper D."/>
            <person name="Lindsay R."/>
            <person name="Hauser H."/>
            <person name="James K.D."/>
            <person name="Quiles M."/>
            <person name="Madan Babu M."/>
            <person name="Saito T."/>
            <person name="Buchrieser C."/>
            <person name="Wardroper A."/>
            <person name="Felder M."/>
            <person name="Thangavelu M."/>
            <person name="Johnson D."/>
            <person name="Knights A."/>
            <person name="Loulseged H."/>
            <person name="Mungall K.L."/>
            <person name="Oliver K."/>
            <person name="Price C."/>
            <person name="Quail M.A."/>
            <person name="Urushihara H."/>
            <person name="Hernandez J."/>
            <person name="Rabbinowitsch E."/>
            <person name="Steffen D."/>
            <person name="Sanders M."/>
            <person name="Ma J."/>
            <person name="Kohara Y."/>
            <person name="Sharp S."/>
            <person name="Simmonds M.N."/>
            <person name="Spiegler S."/>
            <person name="Tivey A."/>
            <person name="Sugano S."/>
            <person name="White B."/>
            <person name="Walker D."/>
            <person name="Woodward J.R."/>
            <person name="Winckler T."/>
            <person name="Tanaka Y."/>
            <person name="Shaulsky G."/>
            <person name="Schleicher M."/>
            <person name="Weinstock G.M."/>
            <person name="Rosenthal A."/>
            <person name="Cox E.C."/>
            <person name="Chisholm R.L."/>
            <person name="Gibbs R.A."/>
            <person name="Loomis W.F."/>
            <person name="Platzer M."/>
            <person name="Kay R.R."/>
            <person name="Williams J.G."/>
            <person name="Dear P.H."/>
            <person name="Noegel A.A."/>
            <person name="Barrell B.G."/>
            <person name="Kuspa A."/>
        </authorList>
    </citation>
    <scope>NUCLEOTIDE SEQUENCE [LARGE SCALE GENOMIC DNA]</scope>
    <source>
        <strain>AX4</strain>
    </source>
</reference>